<dbReference type="EMBL" id="CP000305">
    <property type="protein sequence ID" value="ABG17509.1"/>
    <property type="molecule type" value="Genomic_DNA"/>
</dbReference>
<dbReference type="EMBL" id="ACNQ01000008">
    <property type="protein sequence ID" value="EEO77613.1"/>
    <property type="molecule type" value="Genomic_DNA"/>
</dbReference>
<dbReference type="RefSeq" id="WP_002209652.1">
    <property type="nucleotide sequence ID" value="NZ_ACNQ01000008.1"/>
</dbReference>
<dbReference type="SMR" id="Q1CKH1"/>
<dbReference type="GeneID" id="57976001"/>
<dbReference type="KEGG" id="ypn:YPN_1179"/>
<dbReference type="HOGENOM" id="CLU_018614_3_0_6"/>
<dbReference type="Proteomes" id="UP000008936">
    <property type="component" value="Chromosome"/>
</dbReference>
<dbReference type="GO" id="GO:0005886">
    <property type="term" value="C:plasma membrane"/>
    <property type="evidence" value="ECO:0007669"/>
    <property type="project" value="UniProtKB-SubCell"/>
</dbReference>
<dbReference type="GO" id="GO:0008556">
    <property type="term" value="F:P-type potassium transmembrane transporter activity"/>
    <property type="evidence" value="ECO:0007669"/>
    <property type="project" value="InterPro"/>
</dbReference>
<dbReference type="GO" id="GO:0030955">
    <property type="term" value="F:potassium ion binding"/>
    <property type="evidence" value="ECO:0007669"/>
    <property type="project" value="UniProtKB-UniRule"/>
</dbReference>
<dbReference type="HAMAP" id="MF_00275">
    <property type="entry name" value="KdpA"/>
    <property type="match status" value="1"/>
</dbReference>
<dbReference type="InterPro" id="IPR004623">
    <property type="entry name" value="KdpA"/>
</dbReference>
<dbReference type="NCBIfam" id="TIGR00680">
    <property type="entry name" value="kdpA"/>
    <property type="match status" value="1"/>
</dbReference>
<dbReference type="PANTHER" id="PTHR30607">
    <property type="entry name" value="POTASSIUM-TRANSPORTING ATPASE A CHAIN"/>
    <property type="match status" value="1"/>
</dbReference>
<dbReference type="PANTHER" id="PTHR30607:SF2">
    <property type="entry name" value="POTASSIUM-TRANSPORTING ATPASE POTASSIUM-BINDING SUBUNIT"/>
    <property type="match status" value="1"/>
</dbReference>
<dbReference type="Pfam" id="PF03814">
    <property type="entry name" value="KdpA"/>
    <property type="match status" value="1"/>
</dbReference>
<dbReference type="PIRSF" id="PIRSF001294">
    <property type="entry name" value="K_ATPaseA"/>
    <property type="match status" value="1"/>
</dbReference>
<accession>Q1CKH1</accession>
<accession>C4GRC2</accession>
<evidence type="ECO:0000255" key="1">
    <source>
        <dbReference type="HAMAP-Rule" id="MF_00275"/>
    </source>
</evidence>
<keyword id="KW-0997">Cell inner membrane</keyword>
<keyword id="KW-1003">Cell membrane</keyword>
<keyword id="KW-0406">Ion transport</keyword>
<keyword id="KW-0472">Membrane</keyword>
<keyword id="KW-0630">Potassium</keyword>
<keyword id="KW-0633">Potassium transport</keyword>
<keyword id="KW-0812">Transmembrane</keyword>
<keyword id="KW-1133">Transmembrane helix</keyword>
<keyword id="KW-0813">Transport</keyword>
<proteinExistence type="inferred from homology"/>
<feature type="chain" id="PRO_1000022253" description="Potassium-transporting ATPase potassium-binding subunit">
    <location>
        <begin position="1"/>
        <end position="562"/>
    </location>
</feature>
<feature type="transmembrane region" description="Helical" evidence="1">
    <location>
        <begin position="6"/>
        <end position="26"/>
    </location>
</feature>
<feature type="transmembrane region" description="Helical" evidence="1">
    <location>
        <begin position="62"/>
        <end position="82"/>
    </location>
</feature>
<feature type="transmembrane region" description="Helical" evidence="1">
    <location>
        <begin position="132"/>
        <end position="152"/>
    </location>
</feature>
<feature type="transmembrane region" description="Helical" evidence="1">
    <location>
        <begin position="175"/>
        <end position="195"/>
    </location>
</feature>
<feature type="transmembrane region" description="Helical" evidence="1">
    <location>
        <begin position="253"/>
        <end position="273"/>
    </location>
</feature>
<feature type="transmembrane region" description="Helical" evidence="1">
    <location>
        <begin position="283"/>
        <end position="303"/>
    </location>
</feature>
<feature type="transmembrane region" description="Helical" evidence="1">
    <location>
        <begin position="327"/>
        <end position="347"/>
    </location>
</feature>
<feature type="transmembrane region" description="Helical" evidence="1">
    <location>
        <begin position="356"/>
        <end position="376"/>
    </location>
</feature>
<feature type="transmembrane region" description="Helical" evidence="1">
    <location>
        <begin position="379"/>
        <end position="399"/>
    </location>
</feature>
<feature type="transmembrane region" description="Helical" evidence="1">
    <location>
        <begin position="416"/>
        <end position="436"/>
    </location>
</feature>
<feature type="transmembrane region" description="Helical" evidence="1">
    <location>
        <begin position="483"/>
        <end position="503"/>
    </location>
</feature>
<feature type="transmembrane region" description="Helical" evidence="1">
    <location>
        <begin position="524"/>
        <end position="544"/>
    </location>
</feature>
<sequence length="562" mass="59249">MVASGFLLIASFMLVLFVLSRPLGGFLARLIEGEPFSALQKVEAGLWRCSGVKNAEMNGWQYALAILCFNLLGIVLLFVLLMTQGSLPLNPEHLPGMSWHLALNTAVSFVTNTNWQAYSGENTLSYLSQMAGLTVQNFLSAATGIAVAFALIRAFARHSATTLGNAWVDLVRITLYVLLPIALIIALIFVSQGVLQNLDDYLHITTLEGVQQTLPMGPVASQEAIKVLGTNGGGFFGANSAHPFENPTAFSNFVQMLAIFLIPCALCFAFGQVVGDNRQGHALIWAMSLIFIVAVVVVMYAELAGNPHLSPLGADSNSNMEGKESRFGILATSLYAVVTTAASCGAVNAMHDSFTALGGMIPLWLMQIGEVVFGGVGSGLYGMLLFVLLTVFIAGLMIGRTPEYLGKKIDVFDMKMTALAILVTPTIVLLGTALALCTEAGRAGILNPGAHGFSEVLYALSSAANNNGSAFAGLSVNTPFYNLLLAAAMFIGRFGVILPVLAIASSLVAKKRQPAGNGTLPTGGLLFIGLLIGTVLLVGALTFIPALALGPVAEHLQVWLAH</sequence>
<comment type="function">
    <text evidence="1">Part of the high-affinity ATP-driven potassium transport (or Kdp) system, which catalyzes the hydrolysis of ATP coupled with the electrogenic transport of potassium into the cytoplasm. This subunit binds the periplasmic potassium ions and delivers the ions to the membrane domain of KdpB through an intramembrane tunnel.</text>
</comment>
<comment type="subunit">
    <text evidence="1">The system is composed of three essential subunits: KdpA, KdpB and KdpC.</text>
</comment>
<comment type="subcellular location">
    <subcellularLocation>
        <location evidence="1">Cell inner membrane</location>
        <topology evidence="1">Multi-pass membrane protein</topology>
    </subcellularLocation>
</comment>
<comment type="similarity">
    <text evidence="1">Belongs to the KdpA family.</text>
</comment>
<gene>
    <name evidence="1" type="primary">kdpA</name>
    <name type="ordered locus">YPN_1179</name>
    <name type="ORF">YP516_1290</name>
</gene>
<organism>
    <name type="scientific">Yersinia pestis bv. Antiqua (strain Nepal516)</name>
    <dbReference type="NCBI Taxonomy" id="377628"/>
    <lineage>
        <taxon>Bacteria</taxon>
        <taxon>Pseudomonadati</taxon>
        <taxon>Pseudomonadota</taxon>
        <taxon>Gammaproteobacteria</taxon>
        <taxon>Enterobacterales</taxon>
        <taxon>Yersiniaceae</taxon>
        <taxon>Yersinia</taxon>
    </lineage>
</organism>
<name>KDPA_YERPN</name>
<reference key="1">
    <citation type="journal article" date="2006" name="J. Bacteriol.">
        <title>Complete genome sequence of Yersinia pestis strains Antiqua and Nepal516: evidence of gene reduction in an emerging pathogen.</title>
        <authorList>
            <person name="Chain P.S.G."/>
            <person name="Hu P."/>
            <person name="Malfatti S.A."/>
            <person name="Radnedge L."/>
            <person name="Larimer F."/>
            <person name="Vergez L.M."/>
            <person name="Worsham P."/>
            <person name="Chu M.C."/>
            <person name="Andersen G.L."/>
        </authorList>
    </citation>
    <scope>NUCLEOTIDE SEQUENCE [LARGE SCALE GENOMIC DNA]</scope>
    <source>
        <strain>Nepal516</strain>
    </source>
</reference>
<reference key="2">
    <citation type="submission" date="2009-04" db="EMBL/GenBank/DDBJ databases">
        <title>Yersinia pestis Nepal516A whole genome shotgun sequencing project.</title>
        <authorList>
            <person name="Plunkett G. III"/>
            <person name="Anderson B.D."/>
            <person name="Baumler D.J."/>
            <person name="Burland V."/>
            <person name="Cabot E.L."/>
            <person name="Glasner J.D."/>
            <person name="Mau B."/>
            <person name="Neeno-Eckwall E."/>
            <person name="Perna N.T."/>
            <person name="Munk A.C."/>
            <person name="Tapia R."/>
            <person name="Green L.D."/>
            <person name="Rogers Y.C."/>
            <person name="Detter J.C."/>
            <person name="Bruce D.C."/>
            <person name="Brettin T.S."/>
        </authorList>
    </citation>
    <scope>NUCLEOTIDE SEQUENCE [LARGE SCALE GENOMIC DNA]</scope>
    <source>
        <strain>Nepal516</strain>
    </source>
</reference>
<protein>
    <recommendedName>
        <fullName evidence="1">Potassium-transporting ATPase potassium-binding subunit</fullName>
    </recommendedName>
    <alternativeName>
        <fullName evidence="1">ATP phosphohydrolase [potassium-transporting] A chain</fullName>
    </alternativeName>
    <alternativeName>
        <fullName evidence="1">Potassium-binding and translocating subunit A</fullName>
    </alternativeName>
    <alternativeName>
        <fullName evidence="1">Potassium-translocating ATPase A chain</fullName>
    </alternativeName>
</protein>